<evidence type="ECO:0000255" key="1">
    <source>
        <dbReference type="PROSITE-ProRule" id="PRU00798"/>
    </source>
</evidence>
<keyword id="KW-0903">Direct protein sequencing</keyword>
<keyword id="KW-1015">Disulfide bond</keyword>
<keyword id="KW-0325">Glycoprotein</keyword>
<keyword id="KW-0646">Protease inhibitor</keyword>
<keyword id="KW-0677">Repeat</keyword>
<keyword id="KW-0964">Secreted</keyword>
<keyword id="KW-0722">Serine protease inhibitor</keyword>
<organism>
    <name type="scientific">Chrysolophus amherstiae</name>
    <name type="common">Lady Amherst's pheasant</name>
    <name type="synonym">Phasianus amherstiae</name>
    <dbReference type="NCBI Taxonomy" id="9088"/>
    <lineage>
        <taxon>Eukaryota</taxon>
        <taxon>Metazoa</taxon>
        <taxon>Chordata</taxon>
        <taxon>Craniata</taxon>
        <taxon>Vertebrata</taxon>
        <taxon>Euteleostomi</taxon>
        <taxon>Archelosauria</taxon>
        <taxon>Archosauria</taxon>
        <taxon>Dinosauria</taxon>
        <taxon>Saurischia</taxon>
        <taxon>Theropoda</taxon>
        <taxon>Coelurosauria</taxon>
        <taxon>Aves</taxon>
        <taxon>Neognathae</taxon>
        <taxon>Galloanserae</taxon>
        <taxon>Galliformes</taxon>
        <taxon>Phasianidae</taxon>
        <taxon>Phasianinae</taxon>
        <taxon>Chrysolophus</taxon>
    </lineage>
</organism>
<protein>
    <recommendedName>
        <fullName>Ovomucoid</fullName>
    </recommendedName>
</protein>
<comment type="subcellular location">
    <subcellularLocation>
        <location>Secreted</location>
    </subcellularLocation>
</comment>
<comment type="domain">
    <text>Avian ovomucoid consists of three homologous, tandem Kazal family inhibitory domains.</text>
</comment>
<accession>P68128</accession>
<accession>P05606</accession>
<sequence length="56" mass="6066">LAAVSVDCSEYPKPACTMEYRPLCGSDNKTYGNKCNFCNAVVESNGTLTLNHFGKC</sequence>
<name>IOVO_CHRAM</name>
<reference key="1">
    <citation type="journal article" date="1987" name="Biochemistry">
        <title>Ovomucoid third domains from 100 avian species: isolation, sequences, and hypervariability of enzyme-inhibitor contact residues.</title>
        <authorList>
            <person name="Laskowski M. Jr."/>
            <person name="Kato I."/>
            <person name="Ardelt W."/>
            <person name="Cook J."/>
            <person name="Denton A."/>
            <person name="Empie M.W."/>
            <person name="Kohr W.J."/>
            <person name="Park S.J."/>
            <person name="Parks K."/>
            <person name="Schatzley B.L."/>
            <person name="Schoenberger O.L."/>
            <person name="Tashiro M."/>
            <person name="Vichot G."/>
            <person name="Whatley H.E."/>
            <person name="Wieczorek A."/>
            <person name="Wieczorek M."/>
        </authorList>
    </citation>
    <scope>PROTEIN SEQUENCE</scope>
</reference>
<reference key="2">
    <citation type="book" date="1978" name="Regulatory proteolytic enzymes and their inhibitors">
        <title>Evolution of avian ovomucoids.</title>
        <editorList>
            <person name="Magnusson S."/>
            <person name="Ottesen M."/>
            <person name="Foltmann B."/>
            <person name="Dano K."/>
            <person name="Neurath H."/>
        </editorList>
        <authorList>
            <person name="Kato I."/>
            <person name="Kohr W.J."/>
            <person name="Laskowski M. Jr."/>
        </authorList>
    </citation>
    <scope>PROTEIN SEQUENCE</scope>
</reference>
<proteinExistence type="evidence at protein level"/>
<dbReference type="PIR" id="F31442">
    <property type="entry name" value="F31442"/>
</dbReference>
<dbReference type="SMR" id="P68128"/>
<dbReference type="GO" id="GO:0005615">
    <property type="term" value="C:extracellular space"/>
    <property type="evidence" value="ECO:0007669"/>
    <property type="project" value="UniProtKB-ARBA"/>
</dbReference>
<dbReference type="GO" id="GO:0004867">
    <property type="term" value="F:serine-type endopeptidase inhibitor activity"/>
    <property type="evidence" value="ECO:0007669"/>
    <property type="project" value="UniProtKB-KW"/>
</dbReference>
<dbReference type="CDD" id="cd00104">
    <property type="entry name" value="KAZAL_FS"/>
    <property type="match status" value="1"/>
</dbReference>
<dbReference type="FunFam" id="3.30.60.30:FF:000037">
    <property type="entry name" value="Ovomucoid"/>
    <property type="match status" value="1"/>
</dbReference>
<dbReference type="Gene3D" id="3.30.60.30">
    <property type="match status" value="1"/>
</dbReference>
<dbReference type="InterPro" id="IPR051597">
    <property type="entry name" value="Bifunctional_prot_inhibitor"/>
</dbReference>
<dbReference type="InterPro" id="IPR002350">
    <property type="entry name" value="Kazal_dom"/>
</dbReference>
<dbReference type="InterPro" id="IPR036058">
    <property type="entry name" value="Kazal_dom_sf"/>
</dbReference>
<dbReference type="InterPro" id="IPR001239">
    <property type="entry name" value="Prot_inh_Kazal-m"/>
</dbReference>
<dbReference type="PANTHER" id="PTHR47729:SF1">
    <property type="entry name" value="OVOMUCOID-LIKE-RELATED"/>
    <property type="match status" value="1"/>
</dbReference>
<dbReference type="PANTHER" id="PTHR47729">
    <property type="entry name" value="SERINE PEPTIDASE INHIBITOR, KAZAL TYPE 2, TANDEM DUPLICATE 1-RELATED"/>
    <property type="match status" value="1"/>
</dbReference>
<dbReference type="Pfam" id="PF00050">
    <property type="entry name" value="Kazal_1"/>
    <property type="match status" value="1"/>
</dbReference>
<dbReference type="PRINTS" id="PR00290">
    <property type="entry name" value="KAZALINHBTR"/>
</dbReference>
<dbReference type="SMART" id="SM00280">
    <property type="entry name" value="KAZAL"/>
    <property type="match status" value="1"/>
</dbReference>
<dbReference type="SUPFAM" id="SSF100895">
    <property type="entry name" value="Kazal-type serine protease inhibitors"/>
    <property type="match status" value="1"/>
</dbReference>
<dbReference type="PROSITE" id="PS00282">
    <property type="entry name" value="KAZAL_1"/>
    <property type="match status" value="1"/>
</dbReference>
<dbReference type="PROSITE" id="PS51465">
    <property type="entry name" value="KAZAL_2"/>
    <property type="match status" value="1"/>
</dbReference>
<feature type="chain" id="PRO_0000073083" description="Ovomucoid">
    <location>
        <begin position="1" status="less than"/>
        <end position="56" status="greater than"/>
    </location>
</feature>
<feature type="domain" description="Kazal-like" evidence="1">
    <location>
        <begin position="6"/>
        <end position="56"/>
    </location>
</feature>
<feature type="site" description="Reactive bond 3">
    <location>
        <begin position="18"/>
        <end position="19"/>
    </location>
</feature>
<feature type="glycosylation site" description="N-linked (GlcNAc...) asparagine">
    <location>
        <position position="45"/>
    </location>
</feature>
<feature type="disulfide bond">
    <location>
        <begin position="8"/>
        <end position="38"/>
    </location>
</feature>
<feature type="disulfide bond">
    <location>
        <begin position="16"/>
        <end position="35"/>
    </location>
</feature>
<feature type="disulfide bond">
    <location>
        <begin position="24"/>
        <end position="56"/>
    </location>
</feature>
<feature type="non-terminal residue">
    <location>
        <position position="1"/>
    </location>
</feature>
<feature type="non-terminal residue">
    <location>
        <position position="56"/>
    </location>
</feature>